<reference key="1">
    <citation type="journal article" date="2005" name="PLoS Biol.">
        <title>The genome sequence of Rickettsia felis identifies the first putative conjugative plasmid in an obligate intracellular parasite.</title>
        <authorList>
            <person name="Ogata H."/>
            <person name="Renesto P."/>
            <person name="Audic S."/>
            <person name="Robert C."/>
            <person name="Blanc G."/>
            <person name="Fournier P.-E."/>
            <person name="Parinello H."/>
            <person name="Claverie J.-M."/>
            <person name="Raoult D."/>
        </authorList>
    </citation>
    <scope>NUCLEOTIDE SEQUENCE [LARGE SCALE GENOMIC DNA]</scope>
    <source>
        <strain>ATCC VR-1525 / URRWXCal2</strain>
    </source>
</reference>
<evidence type="ECO:0000255" key="1">
    <source>
        <dbReference type="HAMAP-Rule" id="MF_00909"/>
    </source>
</evidence>
<sequence length="452" mass="48434">MVLNIKAPENIVLKPTITVFGVGGAGSNAVNNMISANLQGANFVVANTDAQSLEHSLCTNKIQLGVSTTRGLGAGASPEVGALAAQESESEIRSYLENSNMVFITAGMGGGTGTGSAPVIARIAKELGILTVGVVTKPFHFEGGHRMKTADKGLIELQQFVDTLIVIPNQNLFRIANEQTTFADAFKMADDILHAGVRGVTDLMIMPGLINLDFADIKAVMSEMGKAMMGTGEASGEDRAIKAAESAISNPLLDHSSMCGARGVLINITGGSDMTLFEVDNAANRIREEVDNLDANIIFGSTFNPELKGIIRVSVVATGIDADKVPTYKPAIAETTNIVPEETYNEPIVQPTQIEEIPDFNSYSTENIEITDSPINQNFIGNEKELGLHANSFNKSEDDSPKPSFLGKIWGSLRASNNQTLERKNIVVNTLDQDNKESDIHDIPAFLRKKRD</sequence>
<feature type="chain" id="PRO_0000280974" description="Cell division protein FtsZ">
    <location>
        <begin position="1"/>
        <end position="452"/>
    </location>
</feature>
<feature type="binding site" evidence="1">
    <location>
        <begin position="24"/>
        <end position="28"/>
    </location>
    <ligand>
        <name>GTP</name>
        <dbReference type="ChEBI" id="CHEBI:37565"/>
    </ligand>
</feature>
<feature type="binding site" evidence="1">
    <location>
        <begin position="111"/>
        <end position="113"/>
    </location>
    <ligand>
        <name>GTP</name>
        <dbReference type="ChEBI" id="CHEBI:37565"/>
    </ligand>
</feature>
<feature type="binding site" evidence="1">
    <location>
        <position position="142"/>
    </location>
    <ligand>
        <name>GTP</name>
        <dbReference type="ChEBI" id="CHEBI:37565"/>
    </ligand>
</feature>
<feature type="binding site" evidence="1">
    <location>
        <position position="146"/>
    </location>
    <ligand>
        <name>GTP</name>
        <dbReference type="ChEBI" id="CHEBI:37565"/>
    </ligand>
</feature>
<feature type="binding site" evidence="1">
    <location>
        <position position="190"/>
    </location>
    <ligand>
        <name>GTP</name>
        <dbReference type="ChEBI" id="CHEBI:37565"/>
    </ligand>
</feature>
<keyword id="KW-0131">Cell cycle</keyword>
<keyword id="KW-0132">Cell division</keyword>
<keyword id="KW-0963">Cytoplasm</keyword>
<keyword id="KW-0342">GTP-binding</keyword>
<keyword id="KW-0547">Nucleotide-binding</keyword>
<keyword id="KW-0717">Septation</keyword>
<name>FTSZ_RICFE</name>
<dbReference type="EMBL" id="CP000053">
    <property type="protein sequence ID" value="AAY61121.1"/>
    <property type="molecule type" value="Genomic_DNA"/>
</dbReference>
<dbReference type="SMR" id="Q4UMT7"/>
<dbReference type="STRING" id="315456.RF_0270"/>
<dbReference type="KEGG" id="rfe:RF_0270"/>
<dbReference type="eggNOG" id="COG0206">
    <property type="taxonomic scope" value="Bacteria"/>
</dbReference>
<dbReference type="HOGENOM" id="CLU_024865_0_4_5"/>
<dbReference type="OrthoDB" id="9813375at2"/>
<dbReference type="Proteomes" id="UP000008548">
    <property type="component" value="Chromosome"/>
</dbReference>
<dbReference type="GO" id="GO:0032153">
    <property type="term" value="C:cell division site"/>
    <property type="evidence" value="ECO:0007669"/>
    <property type="project" value="UniProtKB-UniRule"/>
</dbReference>
<dbReference type="GO" id="GO:0005737">
    <property type="term" value="C:cytoplasm"/>
    <property type="evidence" value="ECO:0007669"/>
    <property type="project" value="UniProtKB-SubCell"/>
</dbReference>
<dbReference type="GO" id="GO:0005525">
    <property type="term" value="F:GTP binding"/>
    <property type="evidence" value="ECO:0007669"/>
    <property type="project" value="UniProtKB-UniRule"/>
</dbReference>
<dbReference type="GO" id="GO:0003924">
    <property type="term" value="F:GTPase activity"/>
    <property type="evidence" value="ECO:0007669"/>
    <property type="project" value="UniProtKB-UniRule"/>
</dbReference>
<dbReference type="GO" id="GO:0000917">
    <property type="term" value="P:division septum assembly"/>
    <property type="evidence" value="ECO:0007669"/>
    <property type="project" value="UniProtKB-KW"/>
</dbReference>
<dbReference type="GO" id="GO:0043093">
    <property type="term" value="P:FtsZ-dependent cytokinesis"/>
    <property type="evidence" value="ECO:0007669"/>
    <property type="project" value="UniProtKB-UniRule"/>
</dbReference>
<dbReference type="GO" id="GO:0051258">
    <property type="term" value="P:protein polymerization"/>
    <property type="evidence" value="ECO:0007669"/>
    <property type="project" value="UniProtKB-UniRule"/>
</dbReference>
<dbReference type="CDD" id="cd02201">
    <property type="entry name" value="FtsZ_type1"/>
    <property type="match status" value="1"/>
</dbReference>
<dbReference type="FunFam" id="3.30.1330.20:FF:000011">
    <property type="entry name" value="Cell division protein FtsZ"/>
    <property type="match status" value="1"/>
</dbReference>
<dbReference type="FunFam" id="3.40.50.1440:FF:000001">
    <property type="entry name" value="Cell division protein FtsZ"/>
    <property type="match status" value="1"/>
</dbReference>
<dbReference type="Gene3D" id="3.30.1330.20">
    <property type="entry name" value="Tubulin/FtsZ, C-terminal domain"/>
    <property type="match status" value="1"/>
</dbReference>
<dbReference type="Gene3D" id="3.40.50.1440">
    <property type="entry name" value="Tubulin/FtsZ, GTPase domain"/>
    <property type="match status" value="1"/>
</dbReference>
<dbReference type="HAMAP" id="MF_00909">
    <property type="entry name" value="FtsZ"/>
    <property type="match status" value="1"/>
</dbReference>
<dbReference type="InterPro" id="IPR000158">
    <property type="entry name" value="Cell_div_FtsZ"/>
</dbReference>
<dbReference type="InterPro" id="IPR020805">
    <property type="entry name" value="Cell_div_FtsZ_CS"/>
</dbReference>
<dbReference type="InterPro" id="IPR045061">
    <property type="entry name" value="FtsZ/CetZ"/>
</dbReference>
<dbReference type="InterPro" id="IPR024757">
    <property type="entry name" value="FtsZ_C"/>
</dbReference>
<dbReference type="InterPro" id="IPR008280">
    <property type="entry name" value="Tub_FtsZ_C"/>
</dbReference>
<dbReference type="InterPro" id="IPR037103">
    <property type="entry name" value="Tubulin/FtsZ-like_C"/>
</dbReference>
<dbReference type="InterPro" id="IPR018316">
    <property type="entry name" value="Tubulin/FtsZ_2-layer-sand-dom"/>
</dbReference>
<dbReference type="InterPro" id="IPR036525">
    <property type="entry name" value="Tubulin/FtsZ_GTPase_sf"/>
</dbReference>
<dbReference type="InterPro" id="IPR003008">
    <property type="entry name" value="Tubulin_FtsZ_GTPase"/>
</dbReference>
<dbReference type="NCBIfam" id="TIGR00065">
    <property type="entry name" value="ftsZ"/>
    <property type="match status" value="1"/>
</dbReference>
<dbReference type="PANTHER" id="PTHR30314">
    <property type="entry name" value="CELL DIVISION PROTEIN FTSZ-RELATED"/>
    <property type="match status" value="1"/>
</dbReference>
<dbReference type="PANTHER" id="PTHR30314:SF3">
    <property type="entry name" value="MITOCHONDRIAL DIVISION PROTEIN FSZA"/>
    <property type="match status" value="1"/>
</dbReference>
<dbReference type="Pfam" id="PF12327">
    <property type="entry name" value="FtsZ_C"/>
    <property type="match status" value="1"/>
</dbReference>
<dbReference type="Pfam" id="PF00091">
    <property type="entry name" value="Tubulin"/>
    <property type="match status" value="1"/>
</dbReference>
<dbReference type="PRINTS" id="PR00423">
    <property type="entry name" value="CELLDVISFTSZ"/>
</dbReference>
<dbReference type="SMART" id="SM00864">
    <property type="entry name" value="Tubulin"/>
    <property type="match status" value="1"/>
</dbReference>
<dbReference type="SMART" id="SM00865">
    <property type="entry name" value="Tubulin_C"/>
    <property type="match status" value="1"/>
</dbReference>
<dbReference type="SUPFAM" id="SSF55307">
    <property type="entry name" value="Tubulin C-terminal domain-like"/>
    <property type="match status" value="1"/>
</dbReference>
<dbReference type="SUPFAM" id="SSF52490">
    <property type="entry name" value="Tubulin nucleotide-binding domain-like"/>
    <property type="match status" value="1"/>
</dbReference>
<dbReference type="PROSITE" id="PS01134">
    <property type="entry name" value="FTSZ_1"/>
    <property type="match status" value="1"/>
</dbReference>
<dbReference type="PROSITE" id="PS01135">
    <property type="entry name" value="FTSZ_2"/>
    <property type="match status" value="1"/>
</dbReference>
<proteinExistence type="inferred from homology"/>
<protein>
    <recommendedName>
        <fullName evidence="1">Cell division protein FtsZ</fullName>
    </recommendedName>
</protein>
<comment type="function">
    <text evidence="1">Essential cell division protein that forms a contractile ring structure (Z ring) at the future cell division site. The regulation of the ring assembly controls the timing and the location of cell division. One of the functions of the FtsZ ring is to recruit other cell division proteins to the septum to produce a new cell wall between the dividing cells. Binds GTP and shows GTPase activity.</text>
</comment>
<comment type="subunit">
    <text evidence="1">Homodimer. Polymerizes to form a dynamic ring structure in a strictly GTP-dependent manner. Interacts directly with several other division proteins.</text>
</comment>
<comment type="subcellular location">
    <subcellularLocation>
        <location evidence="1">Cytoplasm</location>
    </subcellularLocation>
    <text evidence="1">Assembles at midcell at the inner surface of the cytoplasmic membrane.</text>
</comment>
<comment type="similarity">
    <text evidence="1">Belongs to the FtsZ family.</text>
</comment>
<accession>Q4UMT7</accession>
<gene>
    <name evidence="1" type="primary">ftsZ</name>
    <name type="ordered locus">RF_0270</name>
</gene>
<organism>
    <name type="scientific">Rickettsia felis (strain ATCC VR-1525 / URRWXCal2)</name>
    <name type="common">Rickettsia azadi</name>
    <dbReference type="NCBI Taxonomy" id="315456"/>
    <lineage>
        <taxon>Bacteria</taxon>
        <taxon>Pseudomonadati</taxon>
        <taxon>Pseudomonadota</taxon>
        <taxon>Alphaproteobacteria</taxon>
        <taxon>Rickettsiales</taxon>
        <taxon>Rickettsiaceae</taxon>
        <taxon>Rickettsieae</taxon>
        <taxon>Rickettsia</taxon>
        <taxon>spotted fever group</taxon>
    </lineage>
</organism>